<organism>
    <name type="scientific">Streptococcus uberis (strain ATCC BAA-854 / 0140J)</name>
    <dbReference type="NCBI Taxonomy" id="218495"/>
    <lineage>
        <taxon>Bacteria</taxon>
        <taxon>Bacillati</taxon>
        <taxon>Bacillota</taxon>
        <taxon>Bacilli</taxon>
        <taxon>Lactobacillales</taxon>
        <taxon>Streptococcaceae</taxon>
        <taxon>Streptococcus</taxon>
    </lineage>
</organism>
<gene>
    <name evidence="1" type="primary">pepT</name>
    <name type="ordered locus">SUB0706</name>
</gene>
<comment type="function">
    <text evidence="1">Cleaves the N-terminal amino acid of tripeptides.</text>
</comment>
<comment type="catalytic activity">
    <reaction evidence="1">
        <text>Release of the N-terminal residue from a tripeptide.</text>
        <dbReference type="EC" id="3.4.11.4"/>
    </reaction>
</comment>
<comment type="cofactor">
    <cofactor evidence="1">
        <name>Zn(2+)</name>
        <dbReference type="ChEBI" id="CHEBI:29105"/>
    </cofactor>
    <text evidence="1">Binds 2 Zn(2+) ions per subunit.</text>
</comment>
<comment type="subcellular location">
    <subcellularLocation>
        <location evidence="1">Cytoplasm</location>
    </subcellularLocation>
</comment>
<comment type="similarity">
    <text evidence="1">Belongs to the peptidase M20B family.</text>
</comment>
<accession>B9DU35</accession>
<dbReference type="EC" id="3.4.11.4" evidence="1"/>
<dbReference type="EMBL" id="AM946015">
    <property type="protein sequence ID" value="CAR41615.1"/>
    <property type="molecule type" value="Genomic_DNA"/>
</dbReference>
<dbReference type="RefSeq" id="WP_012658223.1">
    <property type="nucleotide sequence ID" value="NC_012004.1"/>
</dbReference>
<dbReference type="SMR" id="B9DU35"/>
<dbReference type="STRING" id="218495.SUB0706"/>
<dbReference type="MEROPS" id="M20.003"/>
<dbReference type="KEGG" id="sub:SUB0706"/>
<dbReference type="eggNOG" id="COG2195">
    <property type="taxonomic scope" value="Bacteria"/>
</dbReference>
<dbReference type="HOGENOM" id="CLU_053676_0_0_9"/>
<dbReference type="OrthoDB" id="9804934at2"/>
<dbReference type="Proteomes" id="UP000000449">
    <property type="component" value="Chromosome"/>
</dbReference>
<dbReference type="GO" id="GO:0005829">
    <property type="term" value="C:cytosol"/>
    <property type="evidence" value="ECO:0007669"/>
    <property type="project" value="TreeGrafter"/>
</dbReference>
<dbReference type="GO" id="GO:0008237">
    <property type="term" value="F:metallopeptidase activity"/>
    <property type="evidence" value="ECO:0007669"/>
    <property type="project" value="UniProtKB-KW"/>
</dbReference>
<dbReference type="GO" id="GO:0045148">
    <property type="term" value="F:tripeptide aminopeptidase activity"/>
    <property type="evidence" value="ECO:0007669"/>
    <property type="project" value="UniProtKB-UniRule"/>
</dbReference>
<dbReference type="GO" id="GO:0008270">
    <property type="term" value="F:zinc ion binding"/>
    <property type="evidence" value="ECO:0007669"/>
    <property type="project" value="UniProtKB-UniRule"/>
</dbReference>
<dbReference type="GO" id="GO:0043171">
    <property type="term" value="P:peptide catabolic process"/>
    <property type="evidence" value="ECO:0007669"/>
    <property type="project" value="UniProtKB-UniRule"/>
</dbReference>
<dbReference type="GO" id="GO:0006508">
    <property type="term" value="P:proteolysis"/>
    <property type="evidence" value="ECO:0007669"/>
    <property type="project" value="UniProtKB-UniRule"/>
</dbReference>
<dbReference type="CDD" id="cd03892">
    <property type="entry name" value="M20_peptT"/>
    <property type="match status" value="1"/>
</dbReference>
<dbReference type="FunFam" id="3.30.70.360:FF:000002">
    <property type="entry name" value="Peptidase T"/>
    <property type="match status" value="1"/>
</dbReference>
<dbReference type="Gene3D" id="3.30.70.360">
    <property type="match status" value="1"/>
</dbReference>
<dbReference type="Gene3D" id="3.40.630.10">
    <property type="entry name" value="Zn peptidases"/>
    <property type="match status" value="1"/>
</dbReference>
<dbReference type="HAMAP" id="MF_00550">
    <property type="entry name" value="Aminopeptidase_M20"/>
    <property type="match status" value="1"/>
</dbReference>
<dbReference type="InterPro" id="IPR001261">
    <property type="entry name" value="ArgE/DapE_CS"/>
</dbReference>
<dbReference type="InterPro" id="IPR036264">
    <property type="entry name" value="Bact_exopeptidase_dim_dom"/>
</dbReference>
<dbReference type="InterPro" id="IPR002933">
    <property type="entry name" value="Peptidase_M20"/>
</dbReference>
<dbReference type="InterPro" id="IPR011650">
    <property type="entry name" value="Peptidase_M20_dimer"/>
</dbReference>
<dbReference type="InterPro" id="IPR010161">
    <property type="entry name" value="Peptidase_M20B"/>
</dbReference>
<dbReference type="NCBIfam" id="TIGR01882">
    <property type="entry name" value="peptidase-T"/>
    <property type="match status" value="1"/>
</dbReference>
<dbReference type="NCBIfam" id="NF003976">
    <property type="entry name" value="PRK05469.1"/>
    <property type="match status" value="1"/>
</dbReference>
<dbReference type="NCBIfam" id="NF009920">
    <property type="entry name" value="PRK13381.1"/>
    <property type="match status" value="1"/>
</dbReference>
<dbReference type="PANTHER" id="PTHR42994">
    <property type="entry name" value="PEPTIDASE T"/>
    <property type="match status" value="1"/>
</dbReference>
<dbReference type="PANTHER" id="PTHR42994:SF1">
    <property type="entry name" value="PEPTIDASE T"/>
    <property type="match status" value="1"/>
</dbReference>
<dbReference type="Pfam" id="PF07687">
    <property type="entry name" value="M20_dimer"/>
    <property type="match status" value="1"/>
</dbReference>
<dbReference type="Pfam" id="PF01546">
    <property type="entry name" value="Peptidase_M20"/>
    <property type="match status" value="1"/>
</dbReference>
<dbReference type="PIRSF" id="PIRSF037215">
    <property type="entry name" value="Peptidase_M20B"/>
    <property type="match status" value="1"/>
</dbReference>
<dbReference type="SUPFAM" id="SSF55031">
    <property type="entry name" value="Bacterial exopeptidase dimerisation domain"/>
    <property type="match status" value="1"/>
</dbReference>
<dbReference type="SUPFAM" id="SSF53187">
    <property type="entry name" value="Zn-dependent exopeptidases"/>
    <property type="match status" value="1"/>
</dbReference>
<dbReference type="PROSITE" id="PS00758">
    <property type="entry name" value="ARGE_DAPE_CPG2_1"/>
    <property type="match status" value="1"/>
</dbReference>
<dbReference type="PROSITE" id="PS00759">
    <property type="entry name" value="ARGE_DAPE_CPG2_2"/>
    <property type="match status" value="1"/>
</dbReference>
<name>PEPT_STRU0</name>
<protein>
    <recommendedName>
        <fullName evidence="1">Peptidase T</fullName>
        <ecNumber evidence="1">3.4.11.4</ecNumber>
    </recommendedName>
    <alternativeName>
        <fullName evidence="1">Aminotripeptidase</fullName>
        <shortName evidence="1">Tripeptidase</shortName>
    </alternativeName>
    <alternativeName>
        <fullName evidence="1">Tripeptide aminopeptidase</fullName>
    </alternativeName>
</protein>
<keyword id="KW-0031">Aminopeptidase</keyword>
<keyword id="KW-0963">Cytoplasm</keyword>
<keyword id="KW-0378">Hydrolase</keyword>
<keyword id="KW-0479">Metal-binding</keyword>
<keyword id="KW-0482">Metalloprotease</keyword>
<keyword id="KW-0645">Protease</keyword>
<keyword id="KW-1185">Reference proteome</keyword>
<keyword id="KW-0862">Zinc</keyword>
<proteinExistence type="inferred from homology"/>
<evidence type="ECO:0000255" key="1">
    <source>
        <dbReference type="HAMAP-Rule" id="MF_00550"/>
    </source>
</evidence>
<sequence length="407" mass="45137">MVYNNLLERFIKYVKVNTRSNPTSQTTPSTQSQVDFALQVLKPEMEAIGLEDVHYLEHNGYIVGTLPANAQHLTRKIGFISHMDTADFNAEGINPQVIDNYEGGNITLGQSGYLLKPDDFPQLNNYLGQTLVTTDGTTLLGADDKSGIAEIMTAIEFLVANPTIEHCEIRVAFGPDEEIGTGANKFDVEDFNVDFAYTVDGGPLGELQYETFSAAGLDVQFLGRNVHPGTAKGQMINALQLAIDFHNQLPETDRPEKTDGYQGFYHLLDLSGTVEEASSSYIIRDFEDDSFKSRKAFIEQLAQKMNDELGENRVVISLQDQYYNMKKVIEKDMTPVNLAKEVMEDLDIKPIIEPIRGGTDGSKISFMGIPTPNIFAGGENMHGRFEFVSLETMEKAVDVILGIVQKP</sequence>
<reference key="1">
    <citation type="journal article" date="2009" name="BMC Genomics">
        <title>Evidence for niche adaptation in the genome of the bovine pathogen Streptococcus uberis.</title>
        <authorList>
            <person name="Ward P.N."/>
            <person name="Holden M.T.G."/>
            <person name="Leigh J.A."/>
            <person name="Lennard N."/>
            <person name="Bignell A."/>
            <person name="Barron A."/>
            <person name="Clark L."/>
            <person name="Quail M.A."/>
            <person name="Woodward J."/>
            <person name="Barrell B.G."/>
            <person name="Egan S.A."/>
            <person name="Field T.R."/>
            <person name="Maskell D."/>
            <person name="Kehoe M."/>
            <person name="Dowson C.G."/>
            <person name="Chanter N."/>
            <person name="Whatmore A.M."/>
            <person name="Bentley S.D."/>
            <person name="Parkhill J."/>
        </authorList>
    </citation>
    <scope>NUCLEOTIDE SEQUENCE [LARGE SCALE GENOMIC DNA]</scope>
    <source>
        <strain>ATCC BAA-854 / 0140J</strain>
    </source>
</reference>
<feature type="chain" id="PRO_1000200904" description="Peptidase T">
    <location>
        <begin position="1"/>
        <end position="407"/>
    </location>
</feature>
<feature type="active site" evidence="1">
    <location>
        <position position="84"/>
    </location>
</feature>
<feature type="active site" description="Proton acceptor" evidence="1">
    <location>
        <position position="177"/>
    </location>
</feature>
<feature type="binding site" evidence="1">
    <location>
        <position position="82"/>
    </location>
    <ligand>
        <name>Zn(2+)</name>
        <dbReference type="ChEBI" id="CHEBI:29105"/>
        <label>1</label>
    </ligand>
</feature>
<feature type="binding site" evidence="1">
    <location>
        <position position="143"/>
    </location>
    <ligand>
        <name>Zn(2+)</name>
        <dbReference type="ChEBI" id="CHEBI:29105"/>
        <label>1</label>
    </ligand>
</feature>
<feature type="binding site" evidence="1">
    <location>
        <position position="143"/>
    </location>
    <ligand>
        <name>Zn(2+)</name>
        <dbReference type="ChEBI" id="CHEBI:29105"/>
        <label>2</label>
    </ligand>
</feature>
<feature type="binding site" evidence="1">
    <location>
        <position position="178"/>
    </location>
    <ligand>
        <name>Zn(2+)</name>
        <dbReference type="ChEBI" id="CHEBI:29105"/>
        <label>2</label>
    </ligand>
</feature>
<feature type="binding site" evidence="1">
    <location>
        <position position="200"/>
    </location>
    <ligand>
        <name>Zn(2+)</name>
        <dbReference type="ChEBI" id="CHEBI:29105"/>
        <label>1</label>
    </ligand>
</feature>
<feature type="binding site" evidence="1">
    <location>
        <position position="382"/>
    </location>
    <ligand>
        <name>Zn(2+)</name>
        <dbReference type="ChEBI" id="CHEBI:29105"/>
        <label>2</label>
    </ligand>
</feature>